<gene>
    <name evidence="1" type="primary">pyrH</name>
    <name type="ordered locus">MJ1259</name>
</gene>
<dbReference type="EC" id="2.7.4.22" evidence="1"/>
<dbReference type="EMBL" id="L77117">
    <property type="protein sequence ID" value="AAB99262.1"/>
    <property type="status" value="ALT_INIT"/>
    <property type="molecule type" value="Genomic_DNA"/>
</dbReference>
<dbReference type="PIR" id="B64457">
    <property type="entry name" value="B64457"/>
</dbReference>
<dbReference type="RefSeq" id="WP_064496770.1">
    <property type="nucleotide sequence ID" value="NC_000909.1"/>
</dbReference>
<dbReference type="SMR" id="Q58656"/>
<dbReference type="FunCoup" id="Q58656">
    <property type="interactions" value="185"/>
</dbReference>
<dbReference type="STRING" id="243232.MJ_1259"/>
<dbReference type="PaxDb" id="243232-MJ_1259"/>
<dbReference type="DNASU" id="1452157"/>
<dbReference type="EnsemblBacteria" id="AAB99262">
    <property type="protein sequence ID" value="AAB99262"/>
    <property type="gene ID" value="MJ_1259"/>
</dbReference>
<dbReference type="GeneID" id="1452157"/>
<dbReference type="KEGG" id="mja:MJ_1259"/>
<dbReference type="eggNOG" id="arCOG00858">
    <property type="taxonomic scope" value="Archaea"/>
</dbReference>
<dbReference type="HOGENOM" id="CLU_079546_0_0_2"/>
<dbReference type="InParanoid" id="Q58656"/>
<dbReference type="OrthoDB" id="372251at2157"/>
<dbReference type="PhylomeDB" id="Q58656"/>
<dbReference type="UniPathway" id="UPA00159">
    <property type="reaction ID" value="UER00275"/>
</dbReference>
<dbReference type="Proteomes" id="UP000000805">
    <property type="component" value="Chromosome"/>
</dbReference>
<dbReference type="GO" id="GO:0005737">
    <property type="term" value="C:cytoplasm"/>
    <property type="evidence" value="ECO:0007669"/>
    <property type="project" value="UniProtKB-SubCell"/>
</dbReference>
<dbReference type="GO" id="GO:0005524">
    <property type="term" value="F:ATP binding"/>
    <property type="evidence" value="ECO:0007669"/>
    <property type="project" value="UniProtKB-KW"/>
</dbReference>
<dbReference type="GO" id="GO:0033862">
    <property type="term" value="F:UMP kinase activity"/>
    <property type="evidence" value="ECO:0000318"/>
    <property type="project" value="GO_Central"/>
</dbReference>
<dbReference type="GO" id="GO:0044210">
    <property type="term" value="P:'de novo' CTP biosynthetic process"/>
    <property type="evidence" value="ECO:0007669"/>
    <property type="project" value="UniProtKB-UniRule"/>
</dbReference>
<dbReference type="GO" id="GO:0006225">
    <property type="term" value="P:UDP biosynthetic process"/>
    <property type="evidence" value="ECO:0000318"/>
    <property type="project" value="GO_Central"/>
</dbReference>
<dbReference type="CDD" id="cd04253">
    <property type="entry name" value="AAK_UMPK-PyrH-Pf"/>
    <property type="match status" value="1"/>
</dbReference>
<dbReference type="FunFam" id="3.40.1160.10:FF:000030">
    <property type="entry name" value="Uridylate kinase"/>
    <property type="match status" value="1"/>
</dbReference>
<dbReference type="Gene3D" id="3.40.1160.10">
    <property type="entry name" value="Acetylglutamate kinase-like"/>
    <property type="match status" value="1"/>
</dbReference>
<dbReference type="HAMAP" id="MF_01220_A">
    <property type="entry name" value="PyrH_A"/>
    <property type="match status" value="1"/>
</dbReference>
<dbReference type="InterPro" id="IPR036393">
    <property type="entry name" value="AceGlu_kinase-like_sf"/>
</dbReference>
<dbReference type="InterPro" id="IPR001048">
    <property type="entry name" value="Asp/Glu/Uridylate_kinase"/>
</dbReference>
<dbReference type="InterPro" id="IPR001057">
    <property type="entry name" value="Glu/AcGlu_kinase"/>
</dbReference>
<dbReference type="InterPro" id="IPR011817">
    <property type="entry name" value="Uridylate_kinase"/>
</dbReference>
<dbReference type="InterPro" id="IPR011818">
    <property type="entry name" value="Uridylate_kinase_arch/spir"/>
</dbReference>
<dbReference type="NCBIfam" id="TIGR02076">
    <property type="entry name" value="pyrH_arch"/>
    <property type="match status" value="1"/>
</dbReference>
<dbReference type="PANTHER" id="PTHR42833">
    <property type="entry name" value="URIDYLATE KINASE"/>
    <property type="match status" value="1"/>
</dbReference>
<dbReference type="PANTHER" id="PTHR42833:SF4">
    <property type="entry name" value="URIDYLATE KINASE PUMPKIN, CHLOROPLASTIC"/>
    <property type="match status" value="1"/>
</dbReference>
<dbReference type="Pfam" id="PF00696">
    <property type="entry name" value="AA_kinase"/>
    <property type="match status" value="1"/>
</dbReference>
<dbReference type="PIRSF" id="PIRSF005650">
    <property type="entry name" value="Uridylate_kin"/>
    <property type="match status" value="1"/>
</dbReference>
<dbReference type="PRINTS" id="PR00474">
    <property type="entry name" value="GLU5KINASE"/>
</dbReference>
<dbReference type="SUPFAM" id="SSF53633">
    <property type="entry name" value="Carbamate kinase-like"/>
    <property type="match status" value="1"/>
</dbReference>
<evidence type="ECO:0000255" key="1">
    <source>
        <dbReference type="HAMAP-Rule" id="MF_01220"/>
    </source>
</evidence>
<evidence type="ECO:0000305" key="2"/>
<reference key="1">
    <citation type="journal article" date="1996" name="Science">
        <title>Complete genome sequence of the methanogenic archaeon, Methanococcus jannaschii.</title>
        <authorList>
            <person name="Bult C.J."/>
            <person name="White O."/>
            <person name="Olsen G.J."/>
            <person name="Zhou L."/>
            <person name="Fleischmann R.D."/>
            <person name="Sutton G.G."/>
            <person name="Blake J.A."/>
            <person name="FitzGerald L.M."/>
            <person name="Clayton R.A."/>
            <person name="Gocayne J.D."/>
            <person name="Kerlavage A.R."/>
            <person name="Dougherty B.A."/>
            <person name="Tomb J.-F."/>
            <person name="Adams M.D."/>
            <person name="Reich C.I."/>
            <person name="Overbeek R."/>
            <person name="Kirkness E.F."/>
            <person name="Weinstock K.G."/>
            <person name="Merrick J.M."/>
            <person name="Glodek A."/>
            <person name="Scott J.L."/>
            <person name="Geoghagen N.S.M."/>
            <person name="Weidman J.F."/>
            <person name="Fuhrmann J.L."/>
            <person name="Nguyen D."/>
            <person name="Utterback T.R."/>
            <person name="Kelley J.M."/>
            <person name="Peterson J.D."/>
            <person name="Sadow P.W."/>
            <person name="Hanna M.C."/>
            <person name="Cotton M.D."/>
            <person name="Roberts K.M."/>
            <person name="Hurst M.A."/>
            <person name="Kaine B.P."/>
            <person name="Borodovsky M."/>
            <person name="Klenk H.-P."/>
            <person name="Fraser C.M."/>
            <person name="Smith H.O."/>
            <person name="Woese C.R."/>
            <person name="Venter J.C."/>
        </authorList>
    </citation>
    <scope>NUCLEOTIDE SEQUENCE [LARGE SCALE GENOMIC DNA]</scope>
    <source>
        <strain>ATCC 43067 / DSM 2661 / JAL-1 / JCM 10045 / NBRC 100440</strain>
    </source>
</reference>
<keyword id="KW-0067">ATP-binding</keyword>
<keyword id="KW-0963">Cytoplasm</keyword>
<keyword id="KW-0418">Kinase</keyword>
<keyword id="KW-0547">Nucleotide-binding</keyword>
<keyword id="KW-0665">Pyrimidine biosynthesis</keyword>
<keyword id="KW-1185">Reference proteome</keyword>
<keyword id="KW-0808">Transferase</keyword>
<sequence>MRIVFDLGGSVVMPKEGAKAEKIMEYANIFKKIKDEGHEVAIVVGGGKTAREYIEIGRELGASESFCDELGIMATRMNAMILITALGDYSIKKVPTSFEEAELILNLGKIPVMGGTHPGHTTDAVAASLAEFINADLLVIGTNVDGVYDKDPNKYEDAKKFDKMSAKELVDLAISSSLKAGSSSVVDLLAAKIIERAKLKVAVVKGTPEELLNVSKGIINGTIIEG</sequence>
<accession>Q58656</accession>
<comment type="function">
    <text evidence="1">Catalyzes the reversible phosphorylation of UMP to UDP.</text>
</comment>
<comment type="catalytic activity">
    <reaction evidence="1">
        <text>UMP + ATP = UDP + ADP</text>
        <dbReference type="Rhea" id="RHEA:24400"/>
        <dbReference type="ChEBI" id="CHEBI:30616"/>
        <dbReference type="ChEBI" id="CHEBI:57865"/>
        <dbReference type="ChEBI" id="CHEBI:58223"/>
        <dbReference type="ChEBI" id="CHEBI:456216"/>
        <dbReference type="EC" id="2.7.4.22"/>
    </reaction>
</comment>
<comment type="activity regulation">
    <text evidence="1">Inhibited by UTP.</text>
</comment>
<comment type="pathway">
    <text evidence="1">Pyrimidine metabolism; CTP biosynthesis via de novo pathway; UDP from UMP (UMPK route): step 1/1.</text>
</comment>
<comment type="subunit">
    <text evidence="1">Homohexamer.</text>
</comment>
<comment type="subcellular location">
    <subcellularLocation>
        <location evidence="1">Cytoplasm</location>
    </subcellularLocation>
</comment>
<comment type="similarity">
    <text evidence="1">Belongs to the UMP kinase family.</text>
</comment>
<comment type="sequence caution" evidence="2">
    <conflict type="erroneous initiation">
        <sequence resource="EMBL-CDS" id="AAB99262"/>
    </conflict>
</comment>
<organism>
    <name type="scientific">Methanocaldococcus jannaschii (strain ATCC 43067 / DSM 2661 / JAL-1 / JCM 10045 / NBRC 100440)</name>
    <name type="common">Methanococcus jannaschii</name>
    <dbReference type="NCBI Taxonomy" id="243232"/>
    <lineage>
        <taxon>Archaea</taxon>
        <taxon>Methanobacteriati</taxon>
        <taxon>Methanobacteriota</taxon>
        <taxon>Methanomada group</taxon>
        <taxon>Methanococci</taxon>
        <taxon>Methanococcales</taxon>
        <taxon>Methanocaldococcaceae</taxon>
        <taxon>Methanocaldococcus</taxon>
    </lineage>
</organism>
<protein>
    <recommendedName>
        <fullName evidence="1">Uridylate kinase</fullName>
        <shortName evidence="1">UK</shortName>
        <ecNumber evidence="1">2.7.4.22</ecNumber>
    </recommendedName>
    <alternativeName>
        <fullName evidence="1">Uridine monophosphate kinase</fullName>
        <shortName evidence="1">UMP kinase</shortName>
        <shortName evidence="1">UMPK</shortName>
    </alternativeName>
</protein>
<name>PYRH_METJA</name>
<feature type="chain" id="PRO_0000143917" description="Uridylate kinase">
    <location>
        <begin position="1"/>
        <end position="226"/>
    </location>
</feature>
<feature type="binding site" evidence="1">
    <location>
        <begin position="9"/>
        <end position="10"/>
    </location>
    <ligand>
        <name>ATP</name>
        <dbReference type="ChEBI" id="CHEBI:30616"/>
    </ligand>
</feature>
<feature type="binding site" evidence="1">
    <location>
        <position position="46"/>
    </location>
    <ligand>
        <name>UMP</name>
        <dbReference type="ChEBI" id="CHEBI:57865"/>
    </ligand>
</feature>
<feature type="binding site" evidence="1">
    <location>
        <position position="47"/>
    </location>
    <ligand>
        <name>ATP</name>
        <dbReference type="ChEBI" id="CHEBI:30616"/>
    </ligand>
</feature>
<feature type="binding site" evidence="1">
    <location>
        <position position="51"/>
    </location>
    <ligand>
        <name>ATP</name>
        <dbReference type="ChEBI" id="CHEBI:30616"/>
    </ligand>
</feature>
<feature type="binding site" evidence="1">
    <location>
        <position position="68"/>
    </location>
    <ligand>
        <name>UMP</name>
        <dbReference type="ChEBI" id="CHEBI:57865"/>
    </ligand>
</feature>
<feature type="binding site" evidence="1">
    <location>
        <begin position="116"/>
        <end position="122"/>
    </location>
    <ligand>
        <name>UMP</name>
        <dbReference type="ChEBI" id="CHEBI:57865"/>
    </ligand>
</feature>
<feature type="binding site" evidence="1">
    <location>
        <position position="142"/>
    </location>
    <ligand>
        <name>ATP</name>
        <dbReference type="ChEBI" id="CHEBI:30616"/>
    </ligand>
</feature>
<feature type="binding site" evidence="1">
    <location>
        <position position="143"/>
    </location>
    <ligand>
        <name>ATP</name>
        <dbReference type="ChEBI" id="CHEBI:30616"/>
    </ligand>
</feature>
<feature type="binding site" evidence="1">
    <location>
        <position position="148"/>
    </location>
    <ligand>
        <name>ATP</name>
        <dbReference type="ChEBI" id="CHEBI:30616"/>
    </ligand>
</feature>
<feature type="binding site" evidence="1">
    <location>
        <position position="151"/>
    </location>
    <ligand>
        <name>ATP</name>
        <dbReference type="ChEBI" id="CHEBI:30616"/>
    </ligand>
</feature>
<proteinExistence type="inferred from homology"/>